<proteinExistence type="evidence at protein level"/>
<comment type="similarity">
    <text evidence="2">Belongs to the eukaryotic ribosomal protein eL15 family.</text>
</comment>
<comment type="caution">
    <text evidence="2">The gene for this protein is duplicated in strains AX3 and AX4. These strains contain a duplication of a segment of 750 kb of chromosome 2 compared to the corresponding sequence in strain AX2.</text>
</comment>
<feature type="chain" id="PRO_0000325948" description="Large ribosomal subunit protein eL15">
    <location>
        <begin position="1"/>
        <end position="205"/>
    </location>
</feature>
<feature type="region of interest" description="Disordered" evidence="1">
    <location>
        <begin position="70"/>
        <end position="90"/>
    </location>
</feature>
<feature type="region of interest" description="Disordered" evidence="1">
    <location>
        <begin position="172"/>
        <end position="197"/>
    </location>
</feature>
<organism>
    <name type="scientific">Dictyostelium discoideum</name>
    <name type="common">Social amoeba</name>
    <dbReference type="NCBI Taxonomy" id="44689"/>
    <lineage>
        <taxon>Eukaryota</taxon>
        <taxon>Amoebozoa</taxon>
        <taxon>Evosea</taxon>
        <taxon>Eumycetozoa</taxon>
        <taxon>Dictyostelia</taxon>
        <taxon>Dictyosteliales</taxon>
        <taxon>Dictyosteliaceae</taxon>
        <taxon>Dictyostelium</taxon>
    </lineage>
</organism>
<reference key="1">
    <citation type="journal article" date="2002" name="Nature">
        <title>Sequence and analysis of chromosome 2 of Dictyostelium discoideum.</title>
        <authorList>
            <person name="Gloeckner G."/>
            <person name="Eichinger L."/>
            <person name="Szafranski K."/>
            <person name="Pachebat J.A."/>
            <person name="Bankier A.T."/>
            <person name="Dear P.H."/>
            <person name="Lehmann R."/>
            <person name="Baumgart C."/>
            <person name="Parra G."/>
            <person name="Abril J.F."/>
            <person name="Guigo R."/>
            <person name="Kumpf K."/>
            <person name="Tunggal B."/>
            <person name="Cox E.C."/>
            <person name="Quail M.A."/>
            <person name="Platzer M."/>
            <person name="Rosenthal A."/>
            <person name="Noegel A.A."/>
        </authorList>
    </citation>
    <scope>NUCLEOTIDE SEQUENCE [LARGE SCALE GENOMIC DNA]</scope>
    <source>
        <strain>AX4</strain>
    </source>
</reference>
<reference key="2">
    <citation type="journal article" date="2005" name="Nature">
        <title>The genome of the social amoeba Dictyostelium discoideum.</title>
        <authorList>
            <person name="Eichinger L."/>
            <person name="Pachebat J.A."/>
            <person name="Gloeckner G."/>
            <person name="Rajandream M.A."/>
            <person name="Sucgang R."/>
            <person name="Berriman M."/>
            <person name="Song J."/>
            <person name="Olsen R."/>
            <person name="Szafranski K."/>
            <person name="Xu Q."/>
            <person name="Tunggal B."/>
            <person name="Kummerfeld S."/>
            <person name="Madera M."/>
            <person name="Konfortov B.A."/>
            <person name="Rivero F."/>
            <person name="Bankier A.T."/>
            <person name="Lehmann R."/>
            <person name="Hamlin N."/>
            <person name="Davies R."/>
            <person name="Gaudet P."/>
            <person name="Fey P."/>
            <person name="Pilcher K."/>
            <person name="Chen G."/>
            <person name="Saunders D."/>
            <person name="Sodergren E.J."/>
            <person name="Davis P."/>
            <person name="Kerhornou A."/>
            <person name="Nie X."/>
            <person name="Hall N."/>
            <person name="Anjard C."/>
            <person name="Hemphill L."/>
            <person name="Bason N."/>
            <person name="Farbrother P."/>
            <person name="Desany B."/>
            <person name="Just E."/>
            <person name="Morio T."/>
            <person name="Rost R."/>
            <person name="Churcher C.M."/>
            <person name="Cooper J."/>
            <person name="Haydock S."/>
            <person name="van Driessche N."/>
            <person name="Cronin A."/>
            <person name="Goodhead I."/>
            <person name="Muzny D.M."/>
            <person name="Mourier T."/>
            <person name="Pain A."/>
            <person name="Lu M."/>
            <person name="Harper D."/>
            <person name="Lindsay R."/>
            <person name="Hauser H."/>
            <person name="James K.D."/>
            <person name="Quiles M."/>
            <person name="Madan Babu M."/>
            <person name="Saito T."/>
            <person name="Buchrieser C."/>
            <person name="Wardroper A."/>
            <person name="Felder M."/>
            <person name="Thangavelu M."/>
            <person name="Johnson D."/>
            <person name="Knights A."/>
            <person name="Loulseged H."/>
            <person name="Mungall K.L."/>
            <person name="Oliver K."/>
            <person name="Price C."/>
            <person name="Quail M.A."/>
            <person name="Urushihara H."/>
            <person name="Hernandez J."/>
            <person name="Rabbinowitsch E."/>
            <person name="Steffen D."/>
            <person name="Sanders M."/>
            <person name="Ma J."/>
            <person name="Kohara Y."/>
            <person name="Sharp S."/>
            <person name="Simmonds M.N."/>
            <person name="Spiegler S."/>
            <person name="Tivey A."/>
            <person name="Sugano S."/>
            <person name="White B."/>
            <person name="Walker D."/>
            <person name="Woodward J.R."/>
            <person name="Winckler T."/>
            <person name="Tanaka Y."/>
            <person name="Shaulsky G."/>
            <person name="Schleicher M."/>
            <person name="Weinstock G.M."/>
            <person name="Rosenthal A."/>
            <person name="Cox E.C."/>
            <person name="Chisholm R.L."/>
            <person name="Gibbs R.A."/>
            <person name="Loomis W.F."/>
            <person name="Platzer M."/>
            <person name="Kay R.R."/>
            <person name="Williams J.G."/>
            <person name="Dear P.H."/>
            <person name="Noegel A.A."/>
            <person name="Barrell B.G."/>
            <person name="Kuspa A."/>
        </authorList>
    </citation>
    <scope>NUCLEOTIDE SEQUENCE [LARGE SCALE GENOMIC DNA]</scope>
    <source>
        <strain>AX4</strain>
    </source>
</reference>
<reference key="3">
    <citation type="journal article" date="2006" name="J. Proteome Res.">
        <title>Identification of novel centrosomal proteins in Dictyostelium discoideum by comparative proteomic approaches.</title>
        <authorList>
            <person name="Reinders Y."/>
            <person name="Schulz I."/>
            <person name="Graef R."/>
            <person name="Sickmann A."/>
        </authorList>
    </citation>
    <scope>IDENTIFICATION BY MASS SPECTROMETRY [LARGE SCALE ANALYSIS]</scope>
</reference>
<gene>
    <name type="primary">rpl15-1</name>
    <name type="ORF">DDB_G0272893</name>
</gene>
<gene>
    <name type="primary">rpl15-2</name>
    <name type="ORF">DDB_G0273983</name>
</gene>
<sequence length="205" mass="24270">MGAYKYLQELYKKKQSDAVRFLLRVRCWEYRNLPVCHRASHPTRVDKARRLGYKATQGFVVYRIRVRRGGRKRQVPGGRTGGKPKTHGVNELKPSRNLRSVAEERVGRRCPNLRVLNSYWVNQDSTYKYYEVILVDNSHNAIRNDPRYNWICKPVHKHRELRGLTSAGIKARGLRRKGTHRASKTRPSRQANYKRRNTVVFHRYR</sequence>
<name>RL15_DICDI</name>
<dbReference type="EMBL" id="AAFI02000009">
    <property type="protein sequence ID" value="EAL71084.1"/>
    <property type="molecule type" value="Genomic_DNA"/>
</dbReference>
<dbReference type="EMBL" id="AAFI02000011">
    <property type="protein sequence ID" value="EAL70425.2"/>
    <property type="molecule type" value="Genomic_DNA"/>
</dbReference>
<dbReference type="RefSeq" id="XP_644350.2">
    <property type="nucleotide sequence ID" value="XM_639258.2"/>
</dbReference>
<dbReference type="RefSeq" id="XP_645064.1">
    <property type="nucleotide sequence ID" value="XM_639972.1"/>
</dbReference>
<dbReference type="SMR" id="Q86K01"/>
<dbReference type="FunCoup" id="Q86K01">
    <property type="interactions" value="562"/>
</dbReference>
<dbReference type="IntAct" id="Q86K01">
    <property type="interactions" value="1"/>
</dbReference>
<dbReference type="STRING" id="44689.Q86K01"/>
<dbReference type="PaxDb" id="44689-DDB0229953"/>
<dbReference type="EnsemblProtists" id="EAL70425">
    <property type="protein sequence ID" value="EAL70425"/>
    <property type="gene ID" value="DDB_G0273983"/>
</dbReference>
<dbReference type="EnsemblProtists" id="EAL71084">
    <property type="protein sequence ID" value="EAL71084"/>
    <property type="gene ID" value="DDB_G0272893"/>
</dbReference>
<dbReference type="GeneID" id="8618739"/>
<dbReference type="GeneID" id="8619237"/>
<dbReference type="KEGG" id="ddi:DDB_G0272893"/>
<dbReference type="KEGG" id="ddi:DDB_G0273983"/>
<dbReference type="dictyBase" id="DDB_G0272893">
    <property type="gene designation" value="rpl15-1"/>
</dbReference>
<dbReference type="dictyBase" id="DDB_G0273983">
    <property type="gene designation" value="rpl15-2"/>
</dbReference>
<dbReference type="VEuPathDB" id="AmoebaDB:DDB_G0273983"/>
<dbReference type="eggNOG" id="KOG1678">
    <property type="taxonomic scope" value="Eukaryota"/>
</dbReference>
<dbReference type="HOGENOM" id="CLU_080796_0_0_1"/>
<dbReference type="InParanoid" id="Q86K01"/>
<dbReference type="OMA" id="YIRDAWK"/>
<dbReference type="PhylomeDB" id="Q86K01"/>
<dbReference type="Reactome" id="R-DDI-156827">
    <property type="pathway name" value="L13a-mediated translational silencing of Ceruloplasmin expression"/>
</dbReference>
<dbReference type="Reactome" id="R-DDI-1799339">
    <property type="pathway name" value="SRP-dependent cotranslational protein targeting to membrane"/>
</dbReference>
<dbReference type="Reactome" id="R-DDI-72689">
    <property type="pathway name" value="Formation of a pool of free 40S subunits"/>
</dbReference>
<dbReference type="Reactome" id="R-DDI-72706">
    <property type="pathway name" value="GTP hydrolysis and joining of the 60S ribosomal subunit"/>
</dbReference>
<dbReference type="Reactome" id="R-DDI-975956">
    <property type="pathway name" value="Nonsense Mediated Decay (NMD) independent of the Exon Junction Complex (EJC)"/>
</dbReference>
<dbReference type="Reactome" id="R-DDI-975957">
    <property type="pathway name" value="Nonsense Mediated Decay (NMD) enhanced by the Exon Junction Complex (EJC)"/>
</dbReference>
<dbReference type="PRO" id="PR:Q86K01"/>
<dbReference type="Proteomes" id="UP000002195">
    <property type="component" value="Chromosome 2"/>
</dbReference>
<dbReference type="GO" id="GO:0022625">
    <property type="term" value="C:cytosolic large ribosomal subunit"/>
    <property type="evidence" value="ECO:0000250"/>
    <property type="project" value="dictyBase"/>
</dbReference>
<dbReference type="GO" id="GO:0031012">
    <property type="term" value="C:extracellular matrix"/>
    <property type="evidence" value="ECO:0007005"/>
    <property type="project" value="dictyBase"/>
</dbReference>
<dbReference type="GO" id="GO:0003723">
    <property type="term" value="F:RNA binding"/>
    <property type="evidence" value="ECO:0000250"/>
    <property type="project" value="dictyBase"/>
</dbReference>
<dbReference type="GO" id="GO:0003735">
    <property type="term" value="F:structural constituent of ribosome"/>
    <property type="evidence" value="ECO:0000250"/>
    <property type="project" value="dictyBase"/>
</dbReference>
<dbReference type="GO" id="GO:0002181">
    <property type="term" value="P:cytoplasmic translation"/>
    <property type="evidence" value="ECO:0000318"/>
    <property type="project" value="GO_Central"/>
</dbReference>
<dbReference type="GO" id="GO:0006412">
    <property type="term" value="P:translation"/>
    <property type="evidence" value="ECO:0000250"/>
    <property type="project" value="dictyBase"/>
</dbReference>
<dbReference type="FunFam" id="3.40.1120.10:FF:000001">
    <property type="entry name" value="Ribosomal protein L15"/>
    <property type="match status" value="1"/>
</dbReference>
<dbReference type="Gene3D" id="3.40.1120.10">
    <property type="entry name" value="Ribosomal protein l15e"/>
    <property type="match status" value="1"/>
</dbReference>
<dbReference type="InterPro" id="IPR024794">
    <property type="entry name" value="Rbsml_eL15_core_dom_sf"/>
</dbReference>
<dbReference type="InterPro" id="IPR000439">
    <property type="entry name" value="Ribosomal_eL15"/>
</dbReference>
<dbReference type="InterPro" id="IPR020925">
    <property type="entry name" value="Ribosomal_eL15_CS"/>
</dbReference>
<dbReference type="InterPro" id="IPR012678">
    <property type="entry name" value="Ribosomal_uL23/eL15/eS24_sf"/>
</dbReference>
<dbReference type="NCBIfam" id="NF003269">
    <property type="entry name" value="PRK04243.1"/>
    <property type="match status" value="1"/>
</dbReference>
<dbReference type="PANTHER" id="PTHR11847:SF4">
    <property type="entry name" value="LARGE RIBOSOMAL SUBUNIT PROTEIN EL15"/>
    <property type="match status" value="1"/>
</dbReference>
<dbReference type="PANTHER" id="PTHR11847">
    <property type="entry name" value="RIBOSOMAL PROTEIN L15"/>
    <property type="match status" value="1"/>
</dbReference>
<dbReference type="Pfam" id="PF00827">
    <property type="entry name" value="Ribosomal_L15e"/>
    <property type="match status" value="1"/>
</dbReference>
<dbReference type="SMART" id="SM01384">
    <property type="entry name" value="Ribosomal_L15e"/>
    <property type="match status" value="1"/>
</dbReference>
<dbReference type="SUPFAM" id="SSF54189">
    <property type="entry name" value="Ribosomal proteins S24e, L23 and L15e"/>
    <property type="match status" value="1"/>
</dbReference>
<dbReference type="PROSITE" id="PS01194">
    <property type="entry name" value="RIBOSOMAL_L15E"/>
    <property type="match status" value="1"/>
</dbReference>
<evidence type="ECO:0000256" key="1">
    <source>
        <dbReference type="SAM" id="MobiDB-lite"/>
    </source>
</evidence>
<evidence type="ECO:0000305" key="2"/>
<accession>Q86K01</accession>
<accession>Q556K8</accession>
<accession>Q558K2</accession>
<keyword id="KW-1185">Reference proteome</keyword>
<keyword id="KW-0687">Ribonucleoprotein</keyword>
<keyword id="KW-0689">Ribosomal protein</keyword>
<protein>
    <recommendedName>
        <fullName evidence="2">Large ribosomal subunit protein eL15</fullName>
    </recommendedName>
    <alternativeName>
        <fullName>60S ribosomal protein L15</fullName>
    </alternativeName>
</protein>